<name>SDHD_CARHZ</name>
<accession>Q3AFZ5</accession>
<feature type="chain" id="PRO_0000291723" description="Probable D-serine dehydratase">
    <location>
        <begin position="1"/>
        <end position="422"/>
    </location>
</feature>
<feature type="modified residue" description="N6-(pyridoxal phosphate)lysine" evidence="1">
    <location>
        <position position="105"/>
    </location>
</feature>
<protein>
    <recommendedName>
        <fullName evidence="1">Probable D-serine dehydratase</fullName>
        <ecNumber evidence="1">4.3.1.18</ecNumber>
    </recommendedName>
    <alternativeName>
        <fullName evidence="1">D-serine deaminase</fullName>
        <shortName evidence="1">DSD</shortName>
    </alternativeName>
</protein>
<keyword id="KW-0456">Lyase</keyword>
<keyword id="KW-0663">Pyridoxal phosphate</keyword>
<keyword id="KW-1185">Reference proteome</keyword>
<gene>
    <name evidence="1" type="primary">dsdA</name>
    <name type="ordered locus">CHY_0067</name>
</gene>
<organism>
    <name type="scientific">Carboxydothermus hydrogenoformans (strain ATCC BAA-161 / DSM 6008 / Z-2901)</name>
    <dbReference type="NCBI Taxonomy" id="246194"/>
    <lineage>
        <taxon>Bacteria</taxon>
        <taxon>Bacillati</taxon>
        <taxon>Bacillota</taxon>
        <taxon>Clostridia</taxon>
        <taxon>Thermoanaerobacterales</taxon>
        <taxon>Thermoanaerobacteraceae</taxon>
        <taxon>Carboxydothermus</taxon>
    </lineage>
</organism>
<evidence type="ECO:0000255" key="1">
    <source>
        <dbReference type="HAMAP-Rule" id="MF_01030"/>
    </source>
</evidence>
<dbReference type="EC" id="4.3.1.18" evidence="1"/>
<dbReference type="EMBL" id="CP000141">
    <property type="protein sequence ID" value="ABB15511.1"/>
    <property type="molecule type" value="Genomic_DNA"/>
</dbReference>
<dbReference type="RefSeq" id="WP_011343015.1">
    <property type="nucleotide sequence ID" value="NC_007503.1"/>
</dbReference>
<dbReference type="SMR" id="Q3AFZ5"/>
<dbReference type="FunCoup" id="Q3AFZ5">
    <property type="interactions" value="36"/>
</dbReference>
<dbReference type="STRING" id="246194.CHY_0067"/>
<dbReference type="KEGG" id="chy:CHY_0067"/>
<dbReference type="eggNOG" id="COG3048">
    <property type="taxonomic scope" value="Bacteria"/>
</dbReference>
<dbReference type="HOGENOM" id="CLU_035707_0_0_9"/>
<dbReference type="InParanoid" id="Q3AFZ5"/>
<dbReference type="OrthoDB" id="9780546at2"/>
<dbReference type="Proteomes" id="UP000002706">
    <property type="component" value="Chromosome"/>
</dbReference>
<dbReference type="GO" id="GO:0008721">
    <property type="term" value="F:D-serine ammonia-lyase activity"/>
    <property type="evidence" value="ECO:0007669"/>
    <property type="project" value="UniProtKB-EC"/>
</dbReference>
<dbReference type="GO" id="GO:0016836">
    <property type="term" value="F:hydro-lyase activity"/>
    <property type="evidence" value="ECO:0007669"/>
    <property type="project" value="UniProtKB-UniRule"/>
</dbReference>
<dbReference type="GO" id="GO:0030170">
    <property type="term" value="F:pyridoxal phosphate binding"/>
    <property type="evidence" value="ECO:0007669"/>
    <property type="project" value="InterPro"/>
</dbReference>
<dbReference type="GO" id="GO:0036088">
    <property type="term" value="P:D-serine catabolic process"/>
    <property type="evidence" value="ECO:0007669"/>
    <property type="project" value="TreeGrafter"/>
</dbReference>
<dbReference type="GO" id="GO:0009097">
    <property type="term" value="P:isoleucine biosynthetic process"/>
    <property type="evidence" value="ECO:0007669"/>
    <property type="project" value="TreeGrafter"/>
</dbReference>
<dbReference type="CDD" id="cd06447">
    <property type="entry name" value="D-Ser-dehyd"/>
    <property type="match status" value="1"/>
</dbReference>
<dbReference type="Gene3D" id="3.40.50.1100">
    <property type="match status" value="2"/>
</dbReference>
<dbReference type="HAMAP" id="MF_01030">
    <property type="entry name" value="D_Ser_dehydrat"/>
    <property type="match status" value="1"/>
</dbReference>
<dbReference type="InterPro" id="IPR011780">
    <property type="entry name" value="D_Ser_am_lyase"/>
</dbReference>
<dbReference type="InterPro" id="IPR050147">
    <property type="entry name" value="Ser/Thr_Dehydratase"/>
</dbReference>
<dbReference type="InterPro" id="IPR001926">
    <property type="entry name" value="TrpB-like_PALP"/>
</dbReference>
<dbReference type="InterPro" id="IPR036052">
    <property type="entry name" value="TrpB-like_PALP_sf"/>
</dbReference>
<dbReference type="NCBIfam" id="TIGR02035">
    <property type="entry name" value="D_Ser_am_lyase"/>
    <property type="match status" value="1"/>
</dbReference>
<dbReference type="NCBIfam" id="NF002823">
    <property type="entry name" value="PRK02991.1"/>
    <property type="match status" value="1"/>
</dbReference>
<dbReference type="PANTHER" id="PTHR48078:SF9">
    <property type="entry name" value="D-SERINE DEHYDRATASE"/>
    <property type="match status" value="1"/>
</dbReference>
<dbReference type="PANTHER" id="PTHR48078">
    <property type="entry name" value="THREONINE DEHYDRATASE, MITOCHONDRIAL-RELATED"/>
    <property type="match status" value="1"/>
</dbReference>
<dbReference type="Pfam" id="PF00291">
    <property type="entry name" value="PALP"/>
    <property type="match status" value="1"/>
</dbReference>
<dbReference type="SUPFAM" id="SSF53686">
    <property type="entry name" value="Tryptophan synthase beta subunit-like PLP-dependent enzymes"/>
    <property type="match status" value="1"/>
</dbReference>
<sequence length="422" mass="47309">MSDLLTGIKNYQQMFWQNPNKLSADEALARINFSFDDIFEAQKRLQRFAPLIKKLFPETENGIIESPLAEIPRMKQEIEKLYGGKIHGRLFLKCDNYLKVAGSIKARGGIYEVLKHAETLLLENGLITLEDDYSKIAEERFKKFFSNYKVAVGSTGNLGLSIGIMAAALGFKVDVHMSHDAKEWKKKILRDRGVNVIEYREDYSKAVEEGRKKAAAEKNTYFIDDENSRDLFLGYSVAALRLKDQLTELGIEVNKENPLFVYLPCGVGGAPGGISFGLKTIFKDDVYCYFVEPTHSPCMLLGLVTQKFSAIHVRDFGLDNITEADGLAVGSPSKLVAEIANILIDGIYTIEDEELFKLLALLKDSENIKVEPSAAASLKGPLLVNSRANAIHISWATGGIFIPEEIYREMYMRGKSYLKDVY</sequence>
<reference key="1">
    <citation type="journal article" date="2005" name="PLoS Genet.">
        <title>Life in hot carbon monoxide: the complete genome sequence of Carboxydothermus hydrogenoformans Z-2901.</title>
        <authorList>
            <person name="Wu M."/>
            <person name="Ren Q."/>
            <person name="Durkin A.S."/>
            <person name="Daugherty S.C."/>
            <person name="Brinkac L.M."/>
            <person name="Dodson R.J."/>
            <person name="Madupu R."/>
            <person name="Sullivan S.A."/>
            <person name="Kolonay J.F."/>
            <person name="Nelson W.C."/>
            <person name="Tallon L.J."/>
            <person name="Jones K.M."/>
            <person name="Ulrich L.E."/>
            <person name="Gonzalez J.M."/>
            <person name="Zhulin I.B."/>
            <person name="Robb F.T."/>
            <person name="Eisen J.A."/>
        </authorList>
    </citation>
    <scope>NUCLEOTIDE SEQUENCE [LARGE SCALE GENOMIC DNA]</scope>
    <source>
        <strain>ATCC BAA-161 / DSM 6008 / Z-2901</strain>
    </source>
</reference>
<proteinExistence type="inferred from homology"/>
<comment type="catalytic activity">
    <reaction evidence="1">
        <text>D-serine = pyruvate + NH4(+)</text>
        <dbReference type="Rhea" id="RHEA:13977"/>
        <dbReference type="ChEBI" id="CHEBI:15361"/>
        <dbReference type="ChEBI" id="CHEBI:28938"/>
        <dbReference type="ChEBI" id="CHEBI:35247"/>
        <dbReference type="EC" id="4.3.1.18"/>
    </reaction>
</comment>
<comment type="cofactor">
    <cofactor evidence="1">
        <name>pyridoxal 5'-phosphate</name>
        <dbReference type="ChEBI" id="CHEBI:597326"/>
    </cofactor>
</comment>
<comment type="similarity">
    <text evidence="1">Belongs to the serine/threonine dehydratase family. DsdA subfamily.</text>
</comment>